<protein>
    <recommendedName>
        <fullName>Probable methylmalonyl-CoA mutase large subunit</fullName>
        <shortName>MCM</shortName>
        <ecNumber>5.4.99.2</ecNumber>
    </recommendedName>
</protein>
<keyword id="KW-0002">3D-structure</keyword>
<keyword id="KW-0846">Cobalamin</keyword>
<keyword id="KW-0170">Cobalt</keyword>
<keyword id="KW-0413">Isomerase</keyword>
<keyword id="KW-0479">Metal-binding</keyword>
<keyword id="KW-1185">Reference proteome</keyword>
<accession>P9WJK5</accession>
<accession>L0T9K4</accession>
<accession>P65487</accession>
<accession>P71774</accession>
<feature type="chain" id="PRO_0000194270" description="Probable methylmalonyl-CoA mutase large subunit">
    <location>
        <begin position="1"/>
        <end position="750"/>
    </location>
</feature>
<feature type="domain" description="B12-binding" evidence="3">
    <location>
        <begin position="616"/>
        <end position="748"/>
    </location>
</feature>
<feature type="binding site" evidence="2">
    <location>
        <position position="91"/>
    </location>
    <ligand>
        <name>(R)-methylmalonyl-CoA</name>
        <dbReference type="ChEBI" id="CHEBI:57326"/>
    </ligand>
</feature>
<feature type="binding site" evidence="2">
    <location>
        <position position="94"/>
    </location>
    <ligand>
        <name>(R)-methylmalonyl-CoA</name>
        <dbReference type="ChEBI" id="CHEBI:57326"/>
    </ligand>
</feature>
<feature type="binding site" evidence="2">
    <location>
        <position position="101"/>
    </location>
    <ligand>
        <name>(R)-methylmalonyl-CoA</name>
        <dbReference type="ChEBI" id="CHEBI:57326"/>
    </ligand>
</feature>
<feature type="binding site" evidence="2">
    <location>
        <position position="103"/>
    </location>
    <ligand>
        <name>(R)-methylmalonyl-CoA</name>
        <dbReference type="ChEBI" id="CHEBI:57326"/>
    </ligand>
</feature>
<feature type="binding site" evidence="2">
    <location>
        <position position="105"/>
    </location>
    <ligand>
        <name>(R)-methylmalonyl-CoA</name>
        <dbReference type="ChEBI" id="CHEBI:57326"/>
    </ligand>
</feature>
<feature type="binding site" evidence="2">
    <location>
        <position position="130"/>
    </location>
    <ligand>
        <name>(R)-methylmalonyl-CoA</name>
        <dbReference type="ChEBI" id="CHEBI:57326"/>
    </ligand>
</feature>
<feature type="binding site" evidence="2">
    <location>
        <position position="133"/>
    </location>
    <ligand>
        <name>cob(II)alamin</name>
        <dbReference type="ChEBI" id="CHEBI:16304"/>
    </ligand>
</feature>
<feature type="binding site" evidence="2">
    <location>
        <position position="155"/>
    </location>
    <ligand>
        <name>cob(II)alamin</name>
        <dbReference type="ChEBI" id="CHEBI:16304"/>
    </ligand>
</feature>
<feature type="binding site" evidence="2">
    <location>
        <position position="211"/>
    </location>
    <ligand>
        <name>(R)-methylmalonyl-CoA</name>
        <dbReference type="ChEBI" id="CHEBI:57326"/>
    </ligand>
</feature>
<feature type="binding site" evidence="2">
    <location>
        <position position="213"/>
    </location>
    <ligand>
        <name>(R)-methylmalonyl-CoA</name>
        <dbReference type="ChEBI" id="CHEBI:57326"/>
    </ligand>
</feature>
<feature type="binding site" evidence="2">
    <location>
        <position position="222"/>
    </location>
    <ligand>
        <name>cob(II)alamin</name>
        <dbReference type="ChEBI" id="CHEBI:16304"/>
    </ligand>
</feature>
<feature type="binding site" evidence="2">
    <location>
        <position position="223"/>
    </location>
    <ligand>
        <name>(R)-methylmalonyl-CoA</name>
        <dbReference type="ChEBI" id="CHEBI:57326"/>
    </ligand>
</feature>
<feature type="binding site" evidence="2">
    <location>
        <position position="223"/>
    </location>
    <ligand>
        <name>cob(II)alamin</name>
        <dbReference type="ChEBI" id="CHEBI:16304"/>
    </ligand>
</feature>
<feature type="binding site" evidence="2">
    <location>
        <position position="260"/>
    </location>
    <ligand>
        <name>(R)-methylmalonyl-CoA</name>
        <dbReference type="ChEBI" id="CHEBI:57326"/>
    </ligand>
</feature>
<feature type="binding site" evidence="2">
    <location>
        <position position="299"/>
    </location>
    <ligand>
        <name>(R)-methylmalonyl-CoA</name>
        <dbReference type="ChEBI" id="CHEBI:57326"/>
    </ligand>
</feature>
<feature type="binding site" evidence="2">
    <location>
        <position position="301"/>
    </location>
    <ligand>
        <name>(R)-methylmalonyl-CoA</name>
        <dbReference type="ChEBI" id="CHEBI:57326"/>
    </ligand>
</feature>
<feature type="binding site" evidence="2">
    <location>
        <position position="349"/>
    </location>
    <ligand>
        <name>cob(II)alamin</name>
        <dbReference type="ChEBI" id="CHEBI:16304"/>
    </ligand>
</feature>
<feature type="binding site" evidence="2">
    <location>
        <position position="386"/>
    </location>
    <ligand>
        <name>cob(II)alamin</name>
        <dbReference type="ChEBI" id="CHEBI:16304"/>
    </ligand>
</feature>
<feature type="binding site" evidence="2">
    <location>
        <position position="389"/>
    </location>
    <ligand>
        <name>cob(II)alamin</name>
        <dbReference type="ChEBI" id="CHEBI:16304"/>
    </ligand>
</feature>
<feature type="binding site" evidence="2">
    <location>
        <position position="628"/>
    </location>
    <ligand>
        <name>cob(II)alamin</name>
        <dbReference type="ChEBI" id="CHEBI:16304"/>
    </ligand>
</feature>
<feature type="binding site" description="axial binding residue" evidence="2">
    <location>
        <position position="629"/>
    </location>
    <ligand>
        <name>cob(II)alamin</name>
        <dbReference type="ChEBI" id="CHEBI:16304"/>
    </ligand>
    <ligandPart>
        <name>Co</name>
        <dbReference type="ChEBI" id="CHEBI:27638"/>
    </ligandPart>
</feature>
<feature type="binding site" evidence="2">
    <location>
        <position position="630"/>
    </location>
    <ligand>
        <name>cob(II)alamin</name>
        <dbReference type="ChEBI" id="CHEBI:16304"/>
    </ligand>
</feature>
<feature type="binding site" evidence="2">
    <location>
        <position position="631"/>
    </location>
    <ligand>
        <name>cob(II)alamin</name>
        <dbReference type="ChEBI" id="CHEBI:16304"/>
    </ligand>
</feature>
<feature type="binding site" evidence="2">
    <location>
        <position position="674"/>
    </location>
    <ligand>
        <name>cob(II)alamin</name>
        <dbReference type="ChEBI" id="CHEBI:16304"/>
    </ligand>
</feature>
<feature type="binding site" evidence="2">
    <location>
        <position position="676"/>
    </location>
    <ligand>
        <name>cob(II)alamin</name>
        <dbReference type="ChEBI" id="CHEBI:16304"/>
    </ligand>
</feature>
<feature type="binding site" evidence="2">
    <location>
        <position position="705"/>
    </location>
    <ligand>
        <name>cob(II)alamin</name>
        <dbReference type="ChEBI" id="CHEBI:16304"/>
    </ligand>
</feature>
<feature type="binding site" evidence="2">
    <location>
        <position position="728"/>
    </location>
    <ligand>
        <name>cob(II)alamin</name>
        <dbReference type="ChEBI" id="CHEBI:16304"/>
    </ligand>
</feature>
<feature type="site" description="Transition state stabilizer" evidence="2">
    <location>
        <position position="105"/>
    </location>
</feature>
<feature type="helix" evidence="5">
    <location>
        <begin position="27"/>
        <end position="40"/>
    </location>
</feature>
<feature type="helix" evidence="5">
    <location>
        <begin position="45"/>
        <end position="48"/>
    </location>
</feature>
<feature type="helix" evidence="5">
    <location>
        <begin position="64"/>
        <end position="72"/>
    </location>
</feature>
<feature type="strand" evidence="5">
    <location>
        <begin position="90"/>
        <end position="93"/>
    </location>
</feature>
<feature type="strand" evidence="5">
    <location>
        <begin position="96"/>
        <end position="98"/>
    </location>
</feature>
<feature type="strand" evidence="6">
    <location>
        <begin position="101"/>
        <end position="106"/>
    </location>
</feature>
<feature type="helix" evidence="5">
    <location>
        <begin position="111"/>
        <end position="123"/>
    </location>
</feature>
<feature type="strand" evidence="5">
    <location>
        <begin position="128"/>
        <end position="131"/>
    </location>
</feature>
<feature type="helix" evidence="5">
    <location>
        <begin position="135"/>
        <end position="138"/>
    </location>
</feature>
<feature type="helix" evidence="5">
    <location>
        <begin position="146"/>
        <end position="151"/>
    </location>
</feature>
<feature type="strand" evidence="5">
    <location>
        <begin position="154"/>
        <end position="157"/>
    </location>
</feature>
<feature type="helix" evidence="5">
    <location>
        <begin position="162"/>
        <end position="168"/>
    </location>
</feature>
<feature type="turn" evidence="5">
    <location>
        <begin position="169"/>
        <end position="171"/>
    </location>
</feature>
<feature type="turn" evidence="5">
    <location>
        <begin position="174"/>
        <end position="176"/>
    </location>
</feature>
<feature type="strand" evidence="5">
    <location>
        <begin position="178"/>
        <end position="181"/>
    </location>
</feature>
<feature type="helix" evidence="5">
    <location>
        <begin position="187"/>
        <end position="200"/>
    </location>
</feature>
<feature type="helix" evidence="5">
    <location>
        <begin position="205"/>
        <end position="207"/>
    </location>
</feature>
<feature type="strand" evidence="5">
    <location>
        <begin position="209"/>
        <end position="212"/>
    </location>
</feature>
<feature type="helix" evidence="5">
    <location>
        <begin position="217"/>
        <end position="221"/>
    </location>
</feature>
<feature type="helix" evidence="5">
    <location>
        <begin position="230"/>
        <end position="247"/>
    </location>
</feature>
<feature type="strand" evidence="6">
    <location>
        <begin position="254"/>
        <end position="257"/>
    </location>
</feature>
<feature type="helix" evidence="5">
    <location>
        <begin position="259"/>
        <end position="263"/>
    </location>
</feature>
<feature type="helix" evidence="5">
    <location>
        <begin position="268"/>
        <end position="288"/>
    </location>
</feature>
<feature type="helix" evidence="5">
    <location>
        <begin position="293"/>
        <end position="296"/>
    </location>
</feature>
<feature type="helix" evidence="5">
    <location>
        <begin position="297"/>
        <end position="299"/>
    </location>
</feature>
<feature type="strand" evidence="5">
    <location>
        <begin position="302"/>
        <end position="306"/>
    </location>
</feature>
<feature type="helix" evidence="5">
    <location>
        <begin position="310"/>
        <end position="328"/>
    </location>
</feature>
<feature type="helix" evidence="5">
    <location>
        <begin position="329"/>
        <end position="331"/>
    </location>
</feature>
<feature type="helix" evidence="5">
    <location>
        <begin position="336"/>
        <end position="339"/>
    </location>
</feature>
<feature type="strand" evidence="5">
    <location>
        <begin position="343"/>
        <end position="347"/>
    </location>
</feature>
<feature type="helix" evidence="6">
    <location>
        <begin position="349"/>
        <end position="351"/>
    </location>
</feature>
<feature type="strand" evidence="5">
    <location>
        <begin position="354"/>
        <end position="356"/>
    </location>
</feature>
<feature type="helix" evidence="5">
    <location>
        <begin position="359"/>
        <end position="373"/>
    </location>
</feature>
<feature type="strand" evidence="5">
    <location>
        <begin position="377"/>
        <end position="380"/>
    </location>
</feature>
<feature type="turn" evidence="5">
    <location>
        <begin position="384"/>
        <end position="388"/>
    </location>
</feature>
<feature type="helix" evidence="5">
    <location>
        <begin position="393"/>
        <end position="408"/>
    </location>
</feature>
<feature type="strand" evidence="5">
    <location>
        <begin position="414"/>
        <end position="417"/>
    </location>
</feature>
<feature type="turn" evidence="5">
    <location>
        <begin position="418"/>
        <end position="421"/>
    </location>
</feature>
<feature type="helix" evidence="5">
    <location>
        <begin position="423"/>
        <end position="445"/>
    </location>
</feature>
<feature type="helix" evidence="5">
    <location>
        <begin position="449"/>
        <end position="455"/>
    </location>
</feature>
<feature type="helix" evidence="5">
    <location>
        <begin position="457"/>
        <end position="474"/>
    </location>
</feature>
<feature type="turn" evidence="5">
    <location>
        <begin position="481"/>
        <end position="483"/>
    </location>
</feature>
<feature type="strand" evidence="5">
    <location>
        <begin position="484"/>
        <end position="486"/>
    </location>
</feature>
<feature type="helix" evidence="5">
    <location>
        <begin position="503"/>
        <end position="518"/>
    </location>
</feature>
<feature type="helix" evidence="5">
    <location>
        <begin position="521"/>
        <end position="535"/>
    </location>
</feature>
<feature type="helix" evidence="5">
    <location>
        <begin position="550"/>
        <end position="559"/>
    </location>
</feature>
<feature type="helix" evidence="5">
    <location>
        <begin position="564"/>
        <end position="575"/>
    </location>
</feature>
<feature type="helix" evidence="5">
    <location>
        <begin position="588"/>
        <end position="593"/>
    </location>
</feature>
<feature type="helix" evidence="5">
    <location>
        <begin position="597"/>
        <end position="613"/>
    </location>
</feature>
<feature type="strand" evidence="5">
    <location>
        <begin position="618"/>
        <end position="622"/>
    </location>
</feature>
<feature type="helix" evidence="5">
    <location>
        <begin position="631"/>
        <end position="643"/>
    </location>
</feature>
<feature type="strand" evidence="5">
    <location>
        <begin position="646"/>
        <end position="649"/>
    </location>
</feature>
<feature type="helix" evidence="5">
    <location>
        <begin position="656"/>
        <end position="666"/>
    </location>
</feature>
<feature type="strand" evidence="5">
    <location>
        <begin position="669"/>
        <end position="675"/>
    </location>
</feature>
<feature type="helix" evidence="5">
    <location>
        <begin position="680"/>
        <end position="694"/>
    </location>
</feature>
<feature type="strand" evidence="5">
    <location>
        <begin position="699"/>
        <end position="706"/>
    </location>
</feature>
<feature type="helix" evidence="5">
    <location>
        <begin position="709"/>
        <end position="711"/>
    </location>
</feature>
<feature type="helix" evidence="5">
    <location>
        <begin position="712"/>
        <end position="718"/>
    </location>
</feature>
<feature type="strand" evidence="5">
    <location>
        <begin position="720"/>
        <end position="724"/>
    </location>
</feature>
<feature type="helix" evidence="5">
    <location>
        <begin position="730"/>
        <end position="745"/>
    </location>
</feature>
<sequence>MTTKTPVIGSFAGVPLHSERAAQSPTEAAVHTHVAAAAAAHGYTPEQLVWHTPEGIDVTPVYIAADRAAAEAEGYPLHSFPGEPPFVRGPYPTMYVNQPWTIRQYAGFSTAADSNAFYRRNLAAGQKGLSVAFDLATHRGYDSDHPRVQGDVGMAGVAIDSILDMRQLFDGIDLSTVSVSMTMNGAVLPILALYVVAAEEQGVAPEQLAGTIQNDILKEFMVRNTYIYPPKPSMRIISDIFAYTSAKMPKFNSISISGYHIQEAGATADLELAYTLADGVDYIRAGLNAGLDIDSFAPRLSFFWGIGMNFFMEVAKLRAGRLLWSELVAQFAPKSAKSLSLRTHSQTSGWSLTAQDVFNNVARTCIEAMAATQGHTQSLHTNALDEALALPTDFSARIARNTQLVLQQESGTTRPIDPWGGSYYVEWLTHRLARRARAHIAEVAEHGGMAQAISDGIPKLRIEEAAARTQARIDSGQQPVVGVNKYQVPEDHEIEVLKVENSRVRAEQLAKLQRLRAGRDEPAVRAALAELTRAAAEQGRAGADGLGNNLLALAIDAARAQATVGEISEALEKVYGRHRAEIRTISGVYRDEVGKAPNIAAATELVEKFAEADGRRPRILIAKMGQDGHDRGQKVIATAFADIGFDVDVGSLFSTPEEVARQAADNDVHVIGVSSLAAGHLTLVPALRDALAQVGRPDIMIVVGGVIPPGDFDELYAAGATAIFPPGTVIADAAIDLLHRLAERLGYTLD</sequence>
<evidence type="ECO:0000250" key="1"/>
<evidence type="ECO:0000250" key="2">
    <source>
        <dbReference type="UniProtKB" id="P11653"/>
    </source>
</evidence>
<evidence type="ECO:0000255" key="3">
    <source>
        <dbReference type="PROSITE-ProRule" id="PRU00666"/>
    </source>
</evidence>
<evidence type="ECO:0000305" key="4"/>
<evidence type="ECO:0007829" key="5">
    <source>
        <dbReference type="PDB" id="6OXC"/>
    </source>
</evidence>
<evidence type="ECO:0007829" key="6">
    <source>
        <dbReference type="PDB" id="6OXD"/>
    </source>
</evidence>
<proteinExistence type="evidence at protein level"/>
<dbReference type="EC" id="5.4.99.2"/>
<dbReference type="EMBL" id="AL123456">
    <property type="protein sequence ID" value="CCP44254.1"/>
    <property type="molecule type" value="Genomic_DNA"/>
</dbReference>
<dbReference type="PIR" id="H70711">
    <property type="entry name" value="H70711"/>
</dbReference>
<dbReference type="RefSeq" id="NP_216009.1">
    <property type="nucleotide sequence ID" value="NC_000962.3"/>
</dbReference>
<dbReference type="PDB" id="6OXC">
    <property type="method" value="X-ray"/>
    <property type="resolution" value="1.90 A"/>
    <property type="chains" value="A=1-750"/>
</dbReference>
<dbReference type="PDB" id="6OXD">
    <property type="method" value="X-ray"/>
    <property type="resolution" value="2.00 A"/>
    <property type="chains" value="A=1-750"/>
</dbReference>
<dbReference type="PDBsum" id="6OXC"/>
<dbReference type="PDBsum" id="6OXD"/>
<dbReference type="SMR" id="P9WJK5"/>
<dbReference type="FunCoup" id="P9WJK5">
    <property type="interactions" value="359"/>
</dbReference>
<dbReference type="STRING" id="83332.Rv1493"/>
<dbReference type="PaxDb" id="83332-Rv1493"/>
<dbReference type="DNASU" id="886509"/>
<dbReference type="GeneID" id="886509"/>
<dbReference type="KEGG" id="mtu:Rv1493"/>
<dbReference type="KEGG" id="mtv:RVBD_1493"/>
<dbReference type="TubercuList" id="Rv1493"/>
<dbReference type="eggNOG" id="COG2185">
    <property type="taxonomic scope" value="Bacteria"/>
</dbReference>
<dbReference type="InParanoid" id="P9WJK5"/>
<dbReference type="OrthoDB" id="9762378at2"/>
<dbReference type="PhylomeDB" id="P9WJK5"/>
<dbReference type="Proteomes" id="UP000001584">
    <property type="component" value="Chromosome"/>
</dbReference>
<dbReference type="GO" id="GO:0005737">
    <property type="term" value="C:cytoplasm"/>
    <property type="evidence" value="ECO:0000318"/>
    <property type="project" value="GO_Central"/>
</dbReference>
<dbReference type="GO" id="GO:0005886">
    <property type="term" value="C:plasma membrane"/>
    <property type="evidence" value="ECO:0007005"/>
    <property type="project" value="MTBBASE"/>
</dbReference>
<dbReference type="GO" id="GO:0031419">
    <property type="term" value="F:cobalamin binding"/>
    <property type="evidence" value="ECO:0000318"/>
    <property type="project" value="GO_Central"/>
</dbReference>
<dbReference type="GO" id="GO:0046872">
    <property type="term" value="F:metal ion binding"/>
    <property type="evidence" value="ECO:0007669"/>
    <property type="project" value="UniProtKB-KW"/>
</dbReference>
<dbReference type="GO" id="GO:0004494">
    <property type="term" value="F:methylmalonyl-CoA mutase activity"/>
    <property type="evidence" value="ECO:0000318"/>
    <property type="project" value="GO_Central"/>
</dbReference>
<dbReference type="GO" id="GO:0019678">
    <property type="term" value="P:propionate metabolic process, methylmalonyl pathway"/>
    <property type="evidence" value="ECO:0000315"/>
    <property type="project" value="MTBBASE"/>
</dbReference>
<dbReference type="CDD" id="cd02071">
    <property type="entry name" value="MM_CoA_mut_B12_BD"/>
    <property type="match status" value="1"/>
</dbReference>
<dbReference type="CDD" id="cd03679">
    <property type="entry name" value="MM_CoA_mutase_alpha_like"/>
    <property type="match status" value="1"/>
</dbReference>
<dbReference type="FunFam" id="3.40.50.280:FF:000002">
    <property type="entry name" value="Methylmalonyl-CoA mutase, mitochondrial"/>
    <property type="match status" value="1"/>
</dbReference>
<dbReference type="FunFam" id="3.20.20.240:FF:000001">
    <property type="entry name" value="Probable methylmalonyl-coa mutase"/>
    <property type="match status" value="1"/>
</dbReference>
<dbReference type="Gene3D" id="3.40.50.280">
    <property type="entry name" value="Cobalamin-binding domain"/>
    <property type="match status" value="1"/>
</dbReference>
<dbReference type="Gene3D" id="3.20.20.240">
    <property type="entry name" value="Methylmalonyl-CoA mutase"/>
    <property type="match status" value="1"/>
</dbReference>
<dbReference type="InterPro" id="IPR006159">
    <property type="entry name" value="Acid_CoA_mut_C"/>
</dbReference>
<dbReference type="InterPro" id="IPR016176">
    <property type="entry name" value="Cbl-dep_enz_cat"/>
</dbReference>
<dbReference type="InterPro" id="IPR006158">
    <property type="entry name" value="Cobalamin-bd"/>
</dbReference>
<dbReference type="InterPro" id="IPR036724">
    <property type="entry name" value="Cobalamin-bd_sf"/>
</dbReference>
<dbReference type="InterPro" id="IPR006099">
    <property type="entry name" value="MeMalonylCoA_mutase_a/b_cat"/>
</dbReference>
<dbReference type="InterPro" id="IPR006098">
    <property type="entry name" value="MMCoA_mutase_a_cat"/>
</dbReference>
<dbReference type="NCBIfam" id="TIGR00640">
    <property type="entry name" value="acid_CoA_mut_C"/>
    <property type="match status" value="1"/>
</dbReference>
<dbReference type="NCBIfam" id="TIGR00641">
    <property type="entry name" value="acid_CoA_mut_N"/>
    <property type="match status" value="1"/>
</dbReference>
<dbReference type="NCBIfam" id="NF006944">
    <property type="entry name" value="PRK09426.1"/>
    <property type="match status" value="1"/>
</dbReference>
<dbReference type="PANTHER" id="PTHR48101:SF4">
    <property type="entry name" value="METHYLMALONYL-COA MUTASE, MITOCHONDRIAL"/>
    <property type="match status" value="1"/>
</dbReference>
<dbReference type="PANTHER" id="PTHR48101">
    <property type="entry name" value="METHYLMALONYL-COA MUTASE, MITOCHONDRIAL-RELATED"/>
    <property type="match status" value="1"/>
</dbReference>
<dbReference type="Pfam" id="PF02310">
    <property type="entry name" value="B12-binding"/>
    <property type="match status" value="1"/>
</dbReference>
<dbReference type="Pfam" id="PF01642">
    <property type="entry name" value="MM_CoA_mutase"/>
    <property type="match status" value="1"/>
</dbReference>
<dbReference type="SUPFAM" id="SSF52242">
    <property type="entry name" value="Cobalamin (vitamin B12)-binding domain"/>
    <property type="match status" value="1"/>
</dbReference>
<dbReference type="SUPFAM" id="SSF51703">
    <property type="entry name" value="Cobalamin (vitamin B12)-dependent enzymes"/>
    <property type="match status" value="1"/>
</dbReference>
<dbReference type="PROSITE" id="PS51332">
    <property type="entry name" value="B12_BINDING"/>
    <property type="match status" value="1"/>
</dbReference>
<dbReference type="PROSITE" id="PS00544">
    <property type="entry name" value="METMALONYL_COA_MUTASE"/>
    <property type="match status" value="1"/>
</dbReference>
<comment type="function">
    <text evidence="1">Catalyzes the isomerization of succinyl-CoA to methylmalonyl-CoA during synthesis of propionate from tricarboxylic acid-cycle intermediates.</text>
</comment>
<comment type="catalytic activity">
    <reaction>
        <text>(R)-methylmalonyl-CoA = succinyl-CoA</text>
        <dbReference type="Rhea" id="RHEA:22888"/>
        <dbReference type="ChEBI" id="CHEBI:57292"/>
        <dbReference type="ChEBI" id="CHEBI:57326"/>
        <dbReference type="EC" id="5.4.99.2"/>
    </reaction>
</comment>
<comment type="cofactor">
    <cofactor evidence="1">
        <name>adenosylcob(III)alamin</name>
        <dbReference type="ChEBI" id="CHEBI:18408"/>
    </cofactor>
</comment>
<comment type="subunit">
    <text evidence="1">Heterodimer of an alpha and a beta chain.</text>
</comment>
<comment type="similarity">
    <text evidence="4">Belongs to the methylmalonyl-CoA mutase family.</text>
</comment>
<gene>
    <name type="primary">mutB</name>
    <name type="ordered locus">Rv1493</name>
    <name type="ORF">MTCY277.15</name>
</gene>
<reference key="1">
    <citation type="journal article" date="1998" name="Nature">
        <title>Deciphering the biology of Mycobacterium tuberculosis from the complete genome sequence.</title>
        <authorList>
            <person name="Cole S.T."/>
            <person name="Brosch R."/>
            <person name="Parkhill J."/>
            <person name="Garnier T."/>
            <person name="Churcher C.M."/>
            <person name="Harris D.E."/>
            <person name="Gordon S.V."/>
            <person name="Eiglmeier K."/>
            <person name="Gas S."/>
            <person name="Barry C.E. III"/>
            <person name="Tekaia F."/>
            <person name="Badcock K."/>
            <person name="Basham D."/>
            <person name="Brown D."/>
            <person name="Chillingworth T."/>
            <person name="Connor R."/>
            <person name="Davies R.M."/>
            <person name="Devlin K."/>
            <person name="Feltwell T."/>
            <person name="Gentles S."/>
            <person name="Hamlin N."/>
            <person name="Holroyd S."/>
            <person name="Hornsby T."/>
            <person name="Jagels K."/>
            <person name="Krogh A."/>
            <person name="McLean J."/>
            <person name="Moule S."/>
            <person name="Murphy L.D."/>
            <person name="Oliver S."/>
            <person name="Osborne J."/>
            <person name="Quail M.A."/>
            <person name="Rajandream M.A."/>
            <person name="Rogers J."/>
            <person name="Rutter S."/>
            <person name="Seeger K."/>
            <person name="Skelton S."/>
            <person name="Squares S."/>
            <person name="Squares R."/>
            <person name="Sulston J.E."/>
            <person name="Taylor K."/>
            <person name="Whitehead S."/>
            <person name="Barrell B.G."/>
        </authorList>
    </citation>
    <scope>NUCLEOTIDE SEQUENCE [LARGE SCALE GENOMIC DNA]</scope>
    <source>
        <strain>ATCC 25618 / H37Rv</strain>
    </source>
</reference>
<reference key="2">
    <citation type="journal article" date="2011" name="Mol. Cell. Proteomics">
        <title>Proteogenomic analysis of Mycobacterium tuberculosis by high resolution mass spectrometry.</title>
        <authorList>
            <person name="Kelkar D.S."/>
            <person name="Kumar D."/>
            <person name="Kumar P."/>
            <person name="Balakrishnan L."/>
            <person name="Muthusamy B."/>
            <person name="Yadav A.K."/>
            <person name="Shrivastava P."/>
            <person name="Marimuthu A."/>
            <person name="Anand S."/>
            <person name="Sundaram H."/>
            <person name="Kingsbury R."/>
            <person name="Harsha H.C."/>
            <person name="Nair B."/>
            <person name="Prasad T.S."/>
            <person name="Chauhan D.S."/>
            <person name="Katoch K."/>
            <person name="Katoch V.M."/>
            <person name="Kumar P."/>
            <person name="Chaerkady R."/>
            <person name="Ramachandran S."/>
            <person name="Dash D."/>
            <person name="Pandey A."/>
        </authorList>
    </citation>
    <scope>IDENTIFICATION BY MASS SPECTROMETRY [LARGE SCALE ANALYSIS]</scope>
    <source>
        <strain>ATCC 25618 / H37Rv</strain>
    </source>
</reference>
<organism>
    <name type="scientific">Mycobacterium tuberculosis (strain ATCC 25618 / H37Rv)</name>
    <dbReference type="NCBI Taxonomy" id="83332"/>
    <lineage>
        <taxon>Bacteria</taxon>
        <taxon>Bacillati</taxon>
        <taxon>Actinomycetota</taxon>
        <taxon>Actinomycetes</taxon>
        <taxon>Mycobacteriales</taxon>
        <taxon>Mycobacteriaceae</taxon>
        <taxon>Mycobacterium</taxon>
        <taxon>Mycobacterium tuberculosis complex</taxon>
    </lineage>
</organism>
<name>MUTB_MYCTU</name>